<protein>
    <recommendedName>
        <fullName>Lysophospholipase NTE1</fullName>
        <ecNumber>3.1.1.5</ecNumber>
    </recommendedName>
    <alternativeName>
        <fullName>Intracellular phospholipase B</fullName>
    </alternativeName>
    <alternativeName>
        <fullName>Neuropathy target esterase homolog</fullName>
    </alternativeName>
</protein>
<evidence type="ECO:0000250" key="1"/>
<evidence type="ECO:0000255" key="2"/>
<evidence type="ECO:0000255" key="3">
    <source>
        <dbReference type="PROSITE-ProRule" id="PRU01161"/>
    </source>
</evidence>
<evidence type="ECO:0000256" key="4">
    <source>
        <dbReference type="SAM" id="MobiDB-lite"/>
    </source>
</evidence>
<evidence type="ECO:0000305" key="5"/>
<proteinExistence type="inferred from homology"/>
<feature type="chain" id="PRO_0000295332" description="Lysophospholipase NTE1">
    <location>
        <begin position="1"/>
        <end position="1427"/>
    </location>
</feature>
<feature type="topological domain" description="Cytoplasmic" evidence="1">
    <location>
        <begin position="1"/>
        <end position="60"/>
    </location>
</feature>
<feature type="transmembrane region" description="Helical" evidence="2">
    <location>
        <begin position="61"/>
        <end position="81"/>
    </location>
</feature>
<feature type="topological domain" description="Lumenal" evidence="1">
    <location>
        <begin position="82"/>
        <end position="96"/>
    </location>
</feature>
<feature type="transmembrane region" description="Helical" evidence="2">
    <location>
        <begin position="97"/>
        <end position="117"/>
    </location>
</feature>
<feature type="topological domain" description="Cytoplasmic" evidence="1">
    <location>
        <begin position="118"/>
        <end position="1427"/>
    </location>
</feature>
<feature type="domain" description="PNPLA" evidence="3">
    <location>
        <begin position="1124"/>
        <end position="1288"/>
    </location>
</feature>
<feature type="region of interest" description="Disordered" evidence="4">
    <location>
        <begin position="281"/>
        <end position="315"/>
    </location>
</feature>
<feature type="region of interest" description="Disordered" evidence="4">
    <location>
        <begin position="787"/>
        <end position="807"/>
    </location>
</feature>
<feature type="short sequence motif" description="GXGXXG" evidence="3">
    <location>
        <begin position="1128"/>
        <end position="1133"/>
    </location>
</feature>
<feature type="short sequence motif" description="GXSXG" evidence="3">
    <location>
        <begin position="1155"/>
        <end position="1159"/>
    </location>
</feature>
<feature type="short sequence motif" description="DGA/G" evidence="3">
    <location>
        <begin position="1275"/>
        <end position="1277"/>
    </location>
</feature>
<feature type="compositionally biased region" description="Polar residues" evidence="4">
    <location>
        <begin position="281"/>
        <end position="296"/>
    </location>
</feature>
<feature type="active site" description="Nucleophile" evidence="3">
    <location>
        <position position="1157"/>
    </location>
</feature>
<feature type="active site" description="Proton acceptor" evidence="3">
    <location>
        <position position="1275"/>
    </location>
</feature>
<feature type="binding site">
    <location>
        <begin position="615"/>
        <end position="735"/>
    </location>
    <ligand>
        <name>a nucleoside 3',5'-cyclic phosphate</name>
        <dbReference type="ChEBI" id="CHEBI:58464"/>
        <label>1</label>
    </ligand>
</feature>
<feature type="binding site">
    <location>
        <begin position="731"/>
        <end position="870"/>
    </location>
    <ligand>
        <name>a nucleoside 3',5'-cyclic phosphate</name>
        <dbReference type="ChEBI" id="CHEBI:58464"/>
        <label>2</label>
    </ligand>
</feature>
<gene>
    <name type="primary">NTE1</name>
    <name type="ordered locus">YALI0B11044g</name>
</gene>
<accession>Q6CF18</accession>
<sequence>MDSLHVSSTSVLVDVVEAVETATSLVVDTAEAVATEQATPTAVISNALARSAYAAHTSLSYLAWAFGLWFLRLIGWVCYGIPTYVLGLLGRTINISLQFSSLLLILIALVTVVVAVVRYKYLTVYSRLPQEQPRQEPEIDMYDESDNEDEKTGFANYFDEFLSAVKIFGYLERPVFHELTRHMQTWKLSADEMVPLDDEQGFSVVVEGTVQVFAKQSSFVQNPTSVPDSRKEDSIMFNGERYTLLSEIKNGAPLTSLFNILSLFTDDLQLHKNFDSAVNSPMTSASDVPNMSLSSDGSDDLQKGEPQFGEPRLSEKPAAKLSVTVRAATDSTIAIIPAAAFRRITKKFPQATAHIVQVILTRFQRVTFQTGHHYFGLTPEIFQTEVNLNSHARNELPGYLREGAVKKLNQVYDASQMGGRPKKYTVTLNKKNKGKGSRRQRFSVQLNNQGHLNSQSRMVSLDSLEAVGDHMNPGDLLTNVPLSRQGRPVFELSSVKHKASIQNLSFSGNDDENEDTALRTALVEAIFKVLGIDRDSIQSSIMAVKTMSNTASPMFTGATTGGSSGSLGEELRSRRTGQDSLGASHFGVGLPSERSQNSFYARSETSTSSVDEDSLMAAPFDTIRNDVAQYMDVVLFKKDSLLIKQDDPTPGLYYLIDGVLEVGYTDHHKIYHDLYTVQPGGVGGYIGSILGHRSFADLRARTDVYAGFLPRAAIERMSDKYPMVHLTMAKSLTKVLSRLLLHLDFAMEWVQVRAGQKIYKEGQEADAIYIVLNGRVRSVAETKGDSGIVGGESGDAKDGKSHRKNLTSIGEYGKGESVGELEVLTLTRRPSTLVAIRDAELAKIPRALFESLALHYPSITFEISRIVASRVRTLMEDSAPIPRRMHTFDMAAHHDSYLTIAVVPISQDVDVSEFGRRLYNGMQAVGREACHLNHASVLNHMGRHAFNPLGKLKLSGFLDDIEDRYQTVLYVADTPPGSSWTHTCISQADCVLLVADARSEPDIGEYERVLVKMRTTARTEMVLIHPERYVPPGLTSAWLKPRVWVHTHHHVQMDLPRHEADVLASIRKMKRTGTLANLKNKVQTIQEEFRSMYRPKANIYSTSSANKDDFNRLARILSGQAIGLVLGGGGARGISHIGIIKALEDSGIPIDFVGGTSIGSFIGGLYAKEYDLVPIYGRAKKFSGRVSSLWRMALDLTYPATSYTTGHEFNRGIWKAFGDSRIEDFWLRYFTNTTNITHSRMEIHTSGYAWRYIRASMSLAGLLPPLTDNGSMLLDGGYVDNLPVSEMKAQGASVVFAVDVGSIDDTTPMNYGDSLSGAWVMWNRWNPFGRHPNVPNLAEIQARLAYVSSVGALEKAKHTPGVIYMRPPIDDFATLDFAKFLDIYRVGNKYGHKFLTELREDGKFPAIPGMENVKTKHKRTIARRNSI</sequence>
<reference key="1">
    <citation type="journal article" date="2004" name="Nature">
        <title>Genome evolution in yeasts.</title>
        <authorList>
            <person name="Dujon B."/>
            <person name="Sherman D."/>
            <person name="Fischer G."/>
            <person name="Durrens P."/>
            <person name="Casaregola S."/>
            <person name="Lafontaine I."/>
            <person name="de Montigny J."/>
            <person name="Marck C."/>
            <person name="Neuveglise C."/>
            <person name="Talla E."/>
            <person name="Goffard N."/>
            <person name="Frangeul L."/>
            <person name="Aigle M."/>
            <person name="Anthouard V."/>
            <person name="Babour A."/>
            <person name="Barbe V."/>
            <person name="Barnay S."/>
            <person name="Blanchin S."/>
            <person name="Beckerich J.-M."/>
            <person name="Beyne E."/>
            <person name="Bleykasten C."/>
            <person name="Boisrame A."/>
            <person name="Boyer J."/>
            <person name="Cattolico L."/>
            <person name="Confanioleri F."/>
            <person name="de Daruvar A."/>
            <person name="Despons L."/>
            <person name="Fabre E."/>
            <person name="Fairhead C."/>
            <person name="Ferry-Dumazet H."/>
            <person name="Groppi A."/>
            <person name="Hantraye F."/>
            <person name="Hennequin C."/>
            <person name="Jauniaux N."/>
            <person name="Joyet P."/>
            <person name="Kachouri R."/>
            <person name="Kerrest A."/>
            <person name="Koszul R."/>
            <person name="Lemaire M."/>
            <person name="Lesur I."/>
            <person name="Ma L."/>
            <person name="Muller H."/>
            <person name="Nicaud J.-M."/>
            <person name="Nikolski M."/>
            <person name="Oztas S."/>
            <person name="Ozier-Kalogeropoulos O."/>
            <person name="Pellenz S."/>
            <person name="Potier S."/>
            <person name="Richard G.-F."/>
            <person name="Straub M.-L."/>
            <person name="Suleau A."/>
            <person name="Swennen D."/>
            <person name="Tekaia F."/>
            <person name="Wesolowski-Louvel M."/>
            <person name="Westhof E."/>
            <person name="Wirth B."/>
            <person name="Zeniou-Meyer M."/>
            <person name="Zivanovic Y."/>
            <person name="Bolotin-Fukuhara M."/>
            <person name="Thierry A."/>
            <person name="Bouchier C."/>
            <person name="Caudron B."/>
            <person name="Scarpelli C."/>
            <person name="Gaillardin C."/>
            <person name="Weissenbach J."/>
            <person name="Wincker P."/>
            <person name="Souciet J.-L."/>
        </authorList>
    </citation>
    <scope>NUCLEOTIDE SEQUENCE [LARGE SCALE GENOMIC DNA]</scope>
    <source>
        <strain>CLIB 122 / E 150</strain>
    </source>
</reference>
<name>NTE1_YARLI</name>
<dbReference type="EC" id="3.1.1.5"/>
<dbReference type="EMBL" id="CR382128">
    <property type="protein sequence ID" value="CAG82990.1"/>
    <property type="molecule type" value="Genomic_DNA"/>
</dbReference>
<dbReference type="RefSeq" id="XP_500744.1">
    <property type="nucleotide sequence ID" value="XM_500744.1"/>
</dbReference>
<dbReference type="SMR" id="Q6CF18"/>
<dbReference type="FunCoup" id="Q6CF18">
    <property type="interactions" value="112"/>
</dbReference>
<dbReference type="STRING" id="284591.Q6CF18"/>
<dbReference type="EnsemblFungi" id="CAG82990">
    <property type="protein sequence ID" value="CAG82990"/>
    <property type="gene ID" value="YALI0_B11044g"/>
</dbReference>
<dbReference type="KEGG" id="yli:2906874"/>
<dbReference type="VEuPathDB" id="FungiDB:YALI0_B11044g"/>
<dbReference type="HOGENOM" id="CLU_000960_1_1_1"/>
<dbReference type="InParanoid" id="Q6CF18"/>
<dbReference type="OMA" id="SSGYVWR"/>
<dbReference type="OrthoDB" id="91417at4891"/>
<dbReference type="Proteomes" id="UP000001300">
    <property type="component" value="Chromosome B"/>
</dbReference>
<dbReference type="GO" id="GO:0005783">
    <property type="term" value="C:endoplasmic reticulum"/>
    <property type="evidence" value="ECO:0000318"/>
    <property type="project" value="GO_Central"/>
</dbReference>
<dbReference type="GO" id="GO:0005789">
    <property type="term" value="C:endoplasmic reticulum membrane"/>
    <property type="evidence" value="ECO:0007669"/>
    <property type="project" value="UniProtKB-SubCell"/>
</dbReference>
<dbReference type="GO" id="GO:0004622">
    <property type="term" value="F:lysophospholipase activity"/>
    <property type="evidence" value="ECO:0000318"/>
    <property type="project" value="GO_Central"/>
</dbReference>
<dbReference type="GO" id="GO:0016042">
    <property type="term" value="P:lipid catabolic process"/>
    <property type="evidence" value="ECO:0007669"/>
    <property type="project" value="UniProtKB-KW"/>
</dbReference>
<dbReference type="GO" id="GO:0046470">
    <property type="term" value="P:phosphatidylcholine metabolic process"/>
    <property type="evidence" value="ECO:0007669"/>
    <property type="project" value="InterPro"/>
</dbReference>
<dbReference type="CDD" id="cd00038">
    <property type="entry name" value="CAP_ED"/>
    <property type="match status" value="2"/>
</dbReference>
<dbReference type="FunFam" id="2.60.120.10:FF:000062">
    <property type="entry name" value="Lysophospholipase NTE1"/>
    <property type="match status" value="1"/>
</dbReference>
<dbReference type="FunFam" id="3.40.1090.10:FF:000007">
    <property type="entry name" value="Lysophospholipase NTE1"/>
    <property type="match status" value="1"/>
</dbReference>
<dbReference type="FunFam" id="3.40.1090.10:FF:000018">
    <property type="entry name" value="Lysophospholipase NTE1"/>
    <property type="match status" value="1"/>
</dbReference>
<dbReference type="Gene3D" id="3.40.1090.10">
    <property type="entry name" value="Cytosolic phospholipase A2 catalytic domain"/>
    <property type="match status" value="2"/>
</dbReference>
<dbReference type="Gene3D" id="2.60.120.10">
    <property type="entry name" value="Jelly Rolls"/>
    <property type="match status" value="3"/>
</dbReference>
<dbReference type="InterPro" id="IPR016035">
    <property type="entry name" value="Acyl_Trfase/lysoPLipase"/>
</dbReference>
<dbReference type="InterPro" id="IPR000595">
    <property type="entry name" value="cNMP-bd_dom"/>
</dbReference>
<dbReference type="InterPro" id="IPR018490">
    <property type="entry name" value="cNMP-bd_dom_sf"/>
</dbReference>
<dbReference type="InterPro" id="IPR001423">
    <property type="entry name" value="LysoPLipase_patatin_CS"/>
</dbReference>
<dbReference type="InterPro" id="IPR050301">
    <property type="entry name" value="NTE"/>
</dbReference>
<dbReference type="InterPro" id="IPR056556">
    <property type="entry name" value="NTE1_P-loop_dom"/>
</dbReference>
<dbReference type="InterPro" id="IPR002641">
    <property type="entry name" value="PNPLA_dom"/>
</dbReference>
<dbReference type="InterPro" id="IPR014710">
    <property type="entry name" value="RmlC-like_jellyroll"/>
</dbReference>
<dbReference type="PANTHER" id="PTHR14226:SF29">
    <property type="entry name" value="NEUROPATHY TARGET ESTERASE SWS"/>
    <property type="match status" value="1"/>
</dbReference>
<dbReference type="PANTHER" id="PTHR14226">
    <property type="entry name" value="NEUROPATHY TARGET ESTERASE/SWISS CHEESE D.MELANOGASTER"/>
    <property type="match status" value="1"/>
</dbReference>
<dbReference type="Pfam" id="PF00027">
    <property type="entry name" value="cNMP_binding"/>
    <property type="match status" value="2"/>
</dbReference>
<dbReference type="Pfam" id="PF24179">
    <property type="entry name" value="NTE_Ploop"/>
    <property type="match status" value="1"/>
</dbReference>
<dbReference type="Pfam" id="PF01734">
    <property type="entry name" value="Patatin"/>
    <property type="match status" value="1"/>
</dbReference>
<dbReference type="SMART" id="SM00100">
    <property type="entry name" value="cNMP"/>
    <property type="match status" value="2"/>
</dbReference>
<dbReference type="SUPFAM" id="SSF51206">
    <property type="entry name" value="cAMP-binding domain-like"/>
    <property type="match status" value="3"/>
</dbReference>
<dbReference type="SUPFAM" id="SSF52151">
    <property type="entry name" value="FabD/lysophospholipase-like"/>
    <property type="match status" value="1"/>
</dbReference>
<dbReference type="PROSITE" id="PS50042">
    <property type="entry name" value="CNMP_BINDING_3"/>
    <property type="match status" value="2"/>
</dbReference>
<dbReference type="PROSITE" id="PS51635">
    <property type="entry name" value="PNPLA"/>
    <property type="match status" value="1"/>
</dbReference>
<dbReference type="PROSITE" id="PS01237">
    <property type="entry name" value="UPF0028"/>
    <property type="match status" value="1"/>
</dbReference>
<keyword id="KW-0256">Endoplasmic reticulum</keyword>
<keyword id="KW-0378">Hydrolase</keyword>
<keyword id="KW-0442">Lipid degradation</keyword>
<keyword id="KW-0443">Lipid metabolism</keyword>
<keyword id="KW-0472">Membrane</keyword>
<keyword id="KW-1185">Reference proteome</keyword>
<keyword id="KW-0677">Repeat</keyword>
<keyword id="KW-0812">Transmembrane</keyword>
<keyword id="KW-1133">Transmembrane helix</keyword>
<comment type="function">
    <text evidence="1">Intracellular phospholipase B that catalyzes the double deacylation of phosphatidylcholine (PC) to glycerophosphocholine (GroPCho). Plays an important role in membrane lipid homeostasis. Responsible for the rapid PC turnover in response to inositol, elevated temperatures, or when choline is present in the growth medium (By similarity).</text>
</comment>
<comment type="catalytic activity">
    <reaction>
        <text>a 1-acyl-sn-glycero-3-phosphocholine + H2O = sn-glycerol 3-phosphocholine + a fatty acid + H(+)</text>
        <dbReference type="Rhea" id="RHEA:15177"/>
        <dbReference type="ChEBI" id="CHEBI:15377"/>
        <dbReference type="ChEBI" id="CHEBI:15378"/>
        <dbReference type="ChEBI" id="CHEBI:16870"/>
        <dbReference type="ChEBI" id="CHEBI:28868"/>
        <dbReference type="ChEBI" id="CHEBI:58168"/>
        <dbReference type="EC" id="3.1.1.5"/>
    </reaction>
</comment>
<comment type="activity regulation">
    <text evidence="1">Inhibited by organophosphorus esters.</text>
</comment>
<comment type="subcellular location">
    <subcellularLocation>
        <location evidence="1">Endoplasmic reticulum membrane</location>
        <topology evidence="1">Multi-pass membrane protein</topology>
    </subcellularLocation>
</comment>
<comment type="similarity">
    <text evidence="5">Belongs to the NTE family.</text>
</comment>
<organism>
    <name type="scientific">Yarrowia lipolytica (strain CLIB 122 / E 150)</name>
    <name type="common">Yeast</name>
    <name type="synonym">Candida lipolytica</name>
    <dbReference type="NCBI Taxonomy" id="284591"/>
    <lineage>
        <taxon>Eukaryota</taxon>
        <taxon>Fungi</taxon>
        <taxon>Dikarya</taxon>
        <taxon>Ascomycota</taxon>
        <taxon>Saccharomycotina</taxon>
        <taxon>Dipodascomycetes</taxon>
        <taxon>Dipodascales</taxon>
        <taxon>Dipodascales incertae sedis</taxon>
        <taxon>Yarrowia</taxon>
    </lineage>
</organism>